<keyword id="KW-0539">Nucleus</keyword>
<keyword id="KW-1185">Reference proteome</keyword>
<feature type="chain" id="PRO_0000121053" description="Uncharacterized NOC2 family protein C1B3.09c">
    <location>
        <begin position="1"/>
        <end position="528"/>
    </location>
</feature>
<feature type="region of interest" description="Disordered" evidence="1">
    <location>
        <begin position="1"/>
        <end position="59"/>
    </location>
</feature>
<feature type="compositionally biased region" description="Basic residues" evidence="1">
    <location>
        <begin position="1"/>
        <end position="16"/>
    </location>
</feature>
<feature type="compositionally biased region" description="Basic residues" evidence="1">
    <location>
        <begin position="25"/>
        <end position="43"/>
    </location>
</feature>
<evidence type="ECO:0000256" key="1">
    <source>
        <dbReference type="SAM" id="MobiDB-lite"/>
    </source>
</evidence>
<evidence type="ECO:0000269" key="2">
    <source>
    </source>
</evidence>
<evidence type="ECO:0000269" key="3">
    <source>
    </source>
</evidence>
<evidence type="ECO:0000305" key="4"/>
<protein>
    <recommendedName>
        <fullName>Uncharacterized NOC2 family protein C1B3.09c</fullName>
    </recommendedName>
</protein>
<accession>O13874</accession>
<accession>Q9USD7</accession>
<gene>
    <name type="ORF">SPAC1B3.09c</name>
</gene>
<comment type="subcellular location">
    <subcellularLocation>
        <location evidence="2 3">Nucleus</location>
        <location evidence="2 3">Nucleolus</location>
    </subcellularLocation>
</comment>
<comment type="similarity">
    <text evidence="4">Belongs to the NOC2 family.</text>
</comment>
<reference key="1">
    <citation type="journal article" date="2002" name="Nature">
        <title>The genome sequence of Schizosaccharomyces pombe.</title>
        <authorList>
            <person name="Wood V."/>
            <person name="Gwilliam R."/>
            <person name="Rajandream M.A."/>
            <person name="Lyne M.H."/>
            <person name="Lyne R."/>
            <person name="Stewart A."/>
            <person name="Sgouros J.G."/>
            <person name="Peat N."/>
            <person name="Hayles J."/>
            <person name="Baker S.G."/>
            <person name="Basham D."/>
            <person name="Bowman S."/>
            <person name="Brooks K."/>
            <person name="Brown D."/>
            <person name="Brown S."/>
            <person name="Chillingworth T."/>
            <person name="Churcher C.M."/>
            <person name="Collins M."/>
            <person name="Connor R."/>
            <person name="Cronin A."/>
            <person name="Davis P."/>
            <person name="Feltwell T."/>
            <person name="Fraser A."/>
            <person name="Gentles S."/>
            <person name="Goble A."/>
            <person name="Hamlin N."/>
            <person name="Harris D.E."/>
            <person name="Hidalgo J."/>
            <person name="Hodgson G."/>
            <person name="Holroyd S."/>
            <person name="Hornsby T."/>
            <person name="Howarth S."/>
            <person name="Huckle E.J."/>
            <person name="Hunt S."/>
            <person name="Jagels K."/>
            <person name="James K.D."/>
            <person name="Jones L."/>
            <person name="Jones M."/>
            <person name="Leather S."/>
            <person name="McDonald S."/>
            <person name="McLean J."/>
            <person name="Mooney P."/>
            <person name="Moule S."/>
            <person name="Mungall K.L."/>
            <person name="Murphy L.D."/>
            <person name="Niblett D."/>
            <person name="Odell C."/>
            <person name="Oliver K."/>
            <person name="O'Neil S."/>
            <person name="Pearson D."/>
            <person name="Quail M.A."/>
            <person name="Rabbinowitsch E."/>
            <person name="Rutherford K.M."/>
            <person name="Rutter S."/>
            <person name="Saunders D."/>
            <person name="Seeger K."/>
            <person name="Sharp S."/>
            <person name="Skelton J."/>
            <person name="Simmonds M.N."/>
            <person name="Squares R."/>
            <person name="Squares S."/>
            <person name="Stevens K."/>
            <person name="Taylor K."/>
            <person name="Taylor R.G."/>
            <person name="Tivey A."/>
            <person name="Walsh S.V."/>
            <person name="Warren T."/>
            <person name="Whitehead S."/>
            <person name="Woodward J.R."/>
            <person name="Volckaert G."/>
            <person name="Aert R."/>
            <person name="Robben J."/>
            <person name="Grymonprez B."/>
            <person name="Weltjens I."/>
            <person name="Vanstreels E."/>
            <person name="Rieger M."/>
            <person name="Schaefer M."/>
            <person name="Mueller-Auer S."/>
            <person name="Gabel C."/>
            <person name="Fuchs M."/>
            <person name="Duesterhoeft A."/>
            <person name="Fritzc C."/>
            <person name="Holzer E."/>
            <person name="Moestl D."/>
            <person name="Hilbert H."/>
            <person name="Borzym K."/>
            <person name="Langer I."/>
            <person name="Beck A."/>
            <person name="Lehrach H."/>
            <person name="Reinhardt R."/>
            <person name="Pohl T.M."/>
            <person name="Eger P."/>
            <person name="Zimmermann W."/>
            <person name="Wedler H."/>
            <person name="Wambutt R."/>
            <person name="Purnelle B."/>
            <person name="Goffeau A."/>
            <person name="Cadieu E."/>
            <person name="Dreano S."/>
            <person name="Gloux S."/>
            <person name="Lelaure V."/>
            <person name="Mottier S."/>
            <person name="Galibert F."/>
            <person name="Aves S.J."/>
            <person name="Xiang Z."/>
            <person name="Hunt C."/>
            <person name="Moore K."/>
            <person name="Hurst S.M."/>
            <person name="Lucas M."/>
            <person name="Rochet M."/>
            <person name="Gaillardin C."/>
            <person name="Tallada V.A."/>
            <person name="Garzon A."/>
            <person name="Thode G."/>
            <person name="Daga R.R."/>
            <person name="Cruzado L."/>
            <person name="Jimenez J."/>
            <person name="Sanchez M."/>
            <person name="del Rey F."/>
            <person name="Benito J."/>
            <person name="Dominguez A."/>
            <person name="Revuelta J.L."/>
            <person name="Moreno S."/>
            <person name="Armstrong J."/>
            <person name="Forsburg S.L."/>
            <person name="Cerutti L."/>
            <person name="Lowe T."/>
            <person name="McCombie W.R."/>
            <person name="Paulsen I."/>
            <person name="Potashkin J."/>
            <person name="Shpakovski G.V."/>
            <person name="Ussery D."/>
            <person name="Barrell B.G."/>
            <person name="Nurse P."/>
        </authorList>
    </citation>
    <scope>NUCLEOTIDE SEQUENCE [LARGE SCALE GENOMIC DNA]</scope>
    <source>
        <strain>972 / ATCC 24843</strain>
    </source>
</reference>
<reference key="2">
    <citation type="journal article" date="2000" name="Genes Cells">
        <title>Large-scale screening of intracellular protein localization in living fission yeast cells by the use of a GFP-fusion genomic DNA library.</title>
        <authorList>
            <person name="Ding D.-Q."/>
            <person name="Tomita Y."/>
            <person name="Yamamoto A."/>
            <person name="Chikashige Y."/>
            <person name="Haraguchi T."/>
            <person name="Hiraoka Y."/>
        </authorList>
    </citation>
    <scope>NUCLEOTIDE SEQUENCE [LARGE SCALE GENOMIC DNA] OF 152-373</scope>
    <scope>SUBCELLULAR LOCATION</scope>
    <source>
        <strain>ATCC 38364 / 968</strain>
    </source>
</reference>
<reference key="3">
    <citation type="journal article" date="2006" name="Nat. Biotechnol.">
        <title>ORFeome cloning and global analysis of protein localization in the fission yeast Schizosaccharomyces pombe.</title>
        <authorList>
            <person name="Matsuyama A."/>
            <person name="Arai R."/>
            <person name="Yashiroda Y."/>
            <person name="Shirai A."/>
            <person name="Kamata A."/>
            <person name="Sekido S."/>
            <person name="Kobayashi Y."/>
            <person name="Hashimoto A."/>
            <person name="Hamamoto M."/>
            <person name="Hiraoka Y."/>
            <person name="Horinouchi S."/>
            <person name="Yoshida M."/>
        </authorList>
    </citation>
    <scope>SUBCELLULAR LOCATION [LARGE SCALE ANALYSIS]</scope>
</reference>
<organism>
    <name type="scientific">Schizosaccharomyces pombe (strain 972 / ATCC 24843)</name>
    <name type="common">Fission yeast</name>
    <dbReference type="NCBI Taxonomy" id="284812"/>
    <lineage>
        <taxon>Eukaryota</taxon>
        <taxon>Fungi</taxon>
        <taxon>Dikarya</taxon>
        <taxon>Ascomycota</taxon>
        <taxon>Taphrinomycotina</taxon>
        <taxon>Schizosaccharomycetes</taxon>
        <taxon>Schizosaccharomycetales</taxon>
        <taxon>Schizosaccharomycetaceae</taxon>
        <taxon>Schizosaccharomyces</taxon>
    </lineage>
</organism>
<dbReference type="EMBL" id="CU329670">
    <property type="protein sequence ID" value="CAB11238.1"/>
    <property type="molecule type" value="Genomic_DNA"/>
</dbReference>
<dbReference type="EMBL" id="AB027836">
    <property type="protein sequence ID" value="BAA87140.1"/>
    <property type="molecule type" value="Genomic_DNA"/>
</dbReference>
<dbReference type="PIR" id="T38027">
    <property type="entry name" value="T38027"/>
</dbReference>
<dbReference type="SMR" id="O13874"/>
<dbReference type="FunCoup" id="O13874">
    <property type="interactions" value="26"/>
</dbReference>
<dbReference type="STRING" id="284812.O13874"/>
<dbReference type="iPTMnet" id="O13874"/>
<dbReference type="PaxDb" id="4896-SPAC1B3.09c.1"/>
<dbReference type="EnsemblFungi" id="SPAC1B3.09c.1">
    <property type="protein sequence ID" value="SPAC1B3.09c.1:pep"/>
    <property type="gene ID" value="SPAC1B3.09c"/>
</dbReference>
<dbReference type="KEGG" id="spo:2542229"/>
<dbReference type="PomBase" id="SPAC1B3.09c"/>
<dbReference type="VEuPathDB" id="FungiDB:SPAC1B3.09c"/>
<dbReference type="eggNOG" id="KOG2256">
    <property type="taxonomic scope" value="Eukaryota"/>
</dbReference>
<dbReference type="HOGENOM" id="CLU_526928_0_0_1"/>
<dbReference type="InParanoid" id="O13874"/>
<dbReference type="OMA" id="WSEVICL"/>
<dbReference type="PhylomeDB" id="O13874"/>
<dbReference type="BRENDA" id="2.7.11.4">
    <property type="organism ID" value="2681"/>
</dbReference>
<dbReference type="PRO" id="PR:O13874"/>
<dbReference type="Proteomes" id="UP000002485">
    <property type="component" value="Chromosome I"/>
</dbReference>
<dbReference type="GO" id="GO:0030690">
    <property type="term" value="C:Noc1p-Noc2p complex"/>
    <property type="evidence" value="ECO:0000318"/>
    <property type="project" value="GO_Central"/>
</dbReference>
<dbReference type="GO" id="GO:0030691">
    <property type="term" value="C:Noc2p-Noc3p complex"/>
    <property type="evidence" value="ECO:0000318"/>
    <property type="project" value="GO_Central"/>
</dbReference>
<dbReference type="GO" id="GO:0005730">
    <property type="term" value="C:nucleolus"/>
    <property type="evidence" value="ECO:0007005"/>
    <property type="project" value="PomBase"/>
</dbReference>
<dbReference type="GO" id="GO:0005654">
    <property type="term" value="C:nucleoplasm"/>
    <property type="evidence" value="ECO:0000318"/>
    <property type="project" value="GO_Central"/>
</dbReference>
<dbReference type="GO" id="GO:0005634">
    <property type="term" value="C:nucleus"/>
    <property type="evidence" value="ECO:0007005"/>
    <property type="project" value="PomBase"/>
</dbReference>
<dbReference type="GO" id="GO:0042273">
    <property type="term" value="P:ribosomal large subunit biogenesis"/>
    <property type="evidence" value="ECO:0000318"/>
    <property type="project" value="GO_Central"/>
</dbReference>
<dbReference type="InterPro" id="IPR016024">
    <property type="entry name" value="ARM-type_fold"/>
</dbReference>
<dbReference type="InterPro" id="IPR005343">
    <property type="entry name" value="Noc2"/>
</dbReference>
<dbReference type="PANTHER" id="PTHR12687:SF11">
    <property type="entry name" value="NOC2P-NOC3P COMPLEX SUBUNIT NOC2 FAMILY PROTEIN"/>
    <property type="match status" value="1"/>
</dbReference>
<dbReference type="PANTHER" id="PTHR12687">
    <property type="entry name" value="NUCLEOLAR COMPLEX 2 AND RAD4-RELATED"/>
    <property type="match status" value="1"/>
</dbReference>
<dbReference type="Pfam" id="PF03715">
    <property type="entry name" value="Noc2"/>
    <property type="match status" value="1"/>
</dbReference>
<dbReference type="SUPFAM" id="SSF48371">
    <property type="entry name" value="ARM repeat"/>
    <property type="match status" value="1"/>
</dbReference>
<name>YE19_SCHPO</name>
<sequence>MGKASKATKKFTKNHLKNTIERRKQLARSKKVYGTKNRNSHTKNKLESGTNDNNKNKEDLSKLYSDVTTSNTSHEKDGSEDISVLNVNSKGASLNQVSTQKRRSEKDLLAAIAYCQKLSGTNQADALWKNVEKDLKETLDNVDFDARSKILQDLRLEYAEILLTKFNFEKKGYQNLSSALDTILHIKKFSKFPNGLVTQLCNIFVNHSKAREDIQKAVNHICKIDSSLSVAVFQVFYSPLLDFFKSSPSEVNDFDTLEELQLFLIELLSLNSRFYQKIAFAYLSQLDAHLKRCLKESESSDAYKLIYNWQFTLSLRFWLHVISFLWNDYESISKEISPIAINLTLDCIRLIPTEQYYPLRLHLLKSLVNICRSTRLYIPLSSQFLEMIPFVLRRSSPLSDDKEVMYNFDMYSTLHVPKECLLSKSYRNNVRKEVILLMTEYFAIFSNSIAFPELSAPIIAQLRGLVNESAPGKHVLTFLNKLESTFSFVESRRMNVDFTLNDTSQVEAFEKDLDWRSTPMGKLVSDTT</sequence>
<proteinExistence type="inferred from homology"/>